<reference key="1">
    <citation type="journal article" date="2002" name="Proc. Natl. Acad. Sci. U.S.A.">
        <title>Genome sequence of Streptococcus mutans UA159, a cariogenic dental pathogen.</title>
        <authorList>
            <person name="Ajdic D.J."/>
            <person name="McShan W.M."/>
            <person name="McLaughlin R.E."/>
            <person name="Savic G."/>
            <person name="Chang J."/>
            <person name="Carson M.B."/>
            <person name="Primeaux C."/>
            <person name="Tian R."/>
            <person name="Kenton S."/>
            <person name="Jia H.G."/>
            <person name="Lin S.P."/>
            <person name="Qian Y."/>
            <person name="Li S."/>
            <person name="Zhu H."/>
            <person name="Najar F.Z."/>
            <person name="Lai H."/>
            <person name="White J."/>
            <person name="Roe B.A."/>
            <person name="Ferretti J.J."/>
        </authorList>
    </citation>
    <scope>NUCLEOTIDE SEQUENCE [LARGE SCALE GENOMIC DNA]</scope>
    <source>
        <strain>ATCC 700610 / UA159</strain>
    </source>
</reference>
<accession>Q8DTQ9</accession>
<comment type="catalytic activity">
    <reaction evidence="1">
        <text>D-erythro-1-(imidazol-4-yl)glycerol 3-phosphate = 3-(imidazol-4-yl)-2-oxopropyl phosphate + H2O</text>
        <dbReference type="Rhea" id="RHEA:11040"/>
        <dbReference type="ChEBI" id="CHEBI:15377"/>
        <dbReference type="ChEBI" id="CHEBI:57766"/>
        <dbReference type="ChEBI" id="CHEBI:58278"/>
        <dbReference type="EC" id="4.2.1.19"/>
    </reaction>
</comment>
<comment type="pathway">
    <text evidence="1">Amino-acid biosynthesis; L-histidine biosynthesis; L-histidine from 5-phospho-alpha-D-ribose 1-diphosphate: step 6/9.</text>
</comment>
<comment type="subcellular location">
    <subcellularLocation>
        <location evidence="1">Cytoplasm</location>
    </subcellularLocation>
</comment>
<comment type="similarity">
    <text evidence="1">Belongs to the imidazoleglycerol-phosphate dehydratase family.</text>
</comment>
<feature type="chain" id="PRO_0000158175" description="Imidazoleglycerol-phosphate dehydratase">
    <location>
        <begin position="1"/>
        <end position="194"/>
    </location>
</feature>
<evidence type="ECO:0000255" key="1">
    <source>
        <dbReference type="HAMAP-Rule" id="MF_00076"/>
    </source>
</evidence>
<proteinExistence type="inferred from homology"/>
<organism>
    <name type="scientific">Streptococcus mutans serotype c (strain ATCC 700610 / UA159)</name>
    <dbReference type="NCBI Taxonomy" id="210007"/>
    <lineage>
        <taxon>Bacteria</taxon>
        <taxon>Bacillati</taxon>
        <taxon>Bacillota</taxon>
        <taxon>Bacilli</taxon>
        <taxon>Lactobacillales</taxon>
        <taxon>Streptococcaceae</taxon>
        <taxon>Streptococcus</taxon>
    </lineage>
</organism>
<sequence length="194" mass="21594">MRQAKIERNTFETKIKLSLNLDTQEPVDIQTGVGFFDHMLTLFARHGRMSLVVKADGDLHVDSHHTVEDVGIALGQALRQALGDKVGINRYGTSFVPMDETLGMASLDLSGRSYLVFDAEFDNPKLGNFDTELVEEFFQALAFNVQMNLHLKILHGKNNHHKAESLFKATGRALREAVTINPEIKGVNSTKGML</sequence>
<keyword id="KW-0028">Amino-acid biosynthesis</keyword>
<keyword id="KW-0963">Cytoplasm</keyword>
<keyword id="KW-0368">Histidine biosynthesis</keyword>
<keyword id="KW-0456">Lyase</keyword>
<keyword id="KW-1185">Reference proteome</keyword>
<dbReference type="EC" id="4.2.1.19" evidence="1"/>
<dbReference type="EMBL" id="AE014133">
    <property type="protein sequence ID" value="AAN58950.1"/>
    <property type="molecule type" value="Genomic_DNA"/>
</dbReference>
<dbReference type="RefSeq" id="NP_721644.1">
    <property type="nucleotide sequence ID" value="NC_004350.2"/>
</dbReference>
<dbReference type="RefSeq" id="WP_002263176.1">
    <property type="nucleotide sequence ID" value="NC_004350.2"/>
</dbReference>
<dbReference type="SMR" id="Q8DTQ9"/>
<dbReference type="STRING" id="210007.SMU_1268"/>
<dbReference type="GeneID" id="93859257"/>
<dbReference type="KEGG" id="smu:SMU_1268"/>
<dbReference type="PATRIC" id="fig|210007.7.peg.1137"/>
<dbReference type="eggNOG" id="COG0131">
    <property type="taxonomic scope" value="Bacteria"/>
</dbReference>
<dbReference type="HOGENOM" id="CLU_044308_2_0_9"/>
<dbReference type="OrthoDB" id="9790411at2"/>
<dbReference type="PhylomeDB" id="Q8DTQ9"/>
<dbReference type="UniPathway" id="UPA00031">
    <property type="reaction ID" value="UER00011"/>
</dbReference>
<dbReference type="Proteomes" id="UP000002512">
    <property type="component" value="Chromosome"/>
</dbReference>
<dbReference type="GO" id="GO:0005737">
    <property type="term" value="C:cytoplasm"/>
    <property type="evidence" value="ECO:0007669"/>
    <property type="project" value="UniProtKB-SubCell"/>
</dbReference>
<dbReference type="GO" id="GO:0004424">
    <property type="term" value="F:imidazoleglycerol-phosphate dehydratase activity"/>
    <property type="evidence" value="ECO:0007669"/>
    <property type="project" value="UniProtKB-UniRule"/>
</dbReference>
<dbReference type="GO" id="GO:0000105">
    <property type="term" value="P:L-histidine biosynthetic process"/>
    <property type="evidence" value="ECO:0007669"/>
    <property type="project" value="UniProtKB-UniRule"/>
</dbReference>
<dbReference type="CDD" id="cd07914">
    <property type="entry name" value="IGPD"/>
    <property type="match status" value="1"/>
</dbReference>
<dbReference type="FunFam" id="3.30.230.40:FF:000001">
    <property type="entry name" value="Imidazoleglycerol-phosphate dehydratase HisB"/>
    <property type="match status" value="1"/>
</dbReference>
<dbReference type="FunFam" id="3.30.230.40:FF:000003">
    <property type="entry name" value="Imidazoleglycerol-phosphate dehydratase HisB"/>
    <property type="match status" value="1"/>
</dbReference>
<dbReference type="Gene3D" id="3.30.230.40">
    <property type="entry name" value="Imidazole glycerol phosphate dehydratase, domain 1"/>
    <property type="match status" value="2"/>
</dbReference>
<dbReference type="HAMAP" id="MF_00076">
    <property type="entry name" value="HisB"/>
    <property type="match status" value="1"/>
</dbReference>
<dbReference type="InterPro" id="IPR038494">
    <property type="entry name" value="IGPD_sf"/>
</dbReference>
<dbReference type="InterPro" id="IPR000807">
    <property type="entry name" value="ImidazoleglycerolP_deHydtase"/>
</dbReference>
<dbReference type="InterPro" id="IPR020565">
    <property type="entry name" value="ImidazoleglycerP_deHydtase_CS"/>
</dbReference>
<dbReference type="InterPro" id="IPR020568">
    <property type="entry name" value="Ribosomal_Su5_D2-typ_SF"/>
</dbReference>
<dbReference type="NCBIfam" id="NF002107">
    <property type="entry name" value="PRK00951.1-2"/>
    <property type="match status" value="1"/>
</dbReference>
<dbReference type="NCBIfam" id="NF002111">
    <property type="entry name" value="PRK00951.2-1"/>
    <property type="match status" value="1"/>
</dbReference>
<dbReference type="NCBIfam" id="NF002114">
    <property type="entry name" value="PRK00951.2-4"/>
    <property type="match status" value="1"/>
</dbReference>
<dbReference type="PANTHER" id="PTHR23133:SF2">
    <property type="entry name" value="IMIDAZOLEGLYCEROL-PHOSPHATE DEHYDRATASE"/>
    <property type="match status" value="1"/>
</dbReference>
<dbReference type="PANTHER" id="PTHR23133">
    <property type="entry name" value="IMIDAZOLEGLYCEROL-PHOSPHATE DEHYDRATASE HIS7"/>
    <property type="match status" value="1"/>
</dbReference>
<dbReference type="Pfam" id="PF00475">
    <property type="entry name" value="IGPD"/>
    <property type="match status" value="1"/>
</dbReference>
<dbReference type="SUPFAM" id="SSF54211">
    <property type="entry name" value="Ribosomal protein S5 domain 2-like"/>
    <property type="match status" value="2"/>
</dbReference>
<dbReference type="PROSITE" id="PS00954">
    <property type="entry name" value="IGP_DEHYDRATASE_1"/>
    <property type="match status" value="1"/>
</dbReference>
<dbReference type="PROSITE" id="PS00955">
    <property type="entry name" value="IGP_DEHYDRATASE_2"/>
    <property type="match status" value="1"/>
</dbReference>
<name>HIS7_STRMU</name>
<protein>
    <recommendedName>
        <fullName evidence="1">Imidazoleglycerol-phosphate dehydratase</fullName>
        <shortName evidence="1">IGPD</shortName>
        <ecNumber evidence="1">4.2.1.19</ecNumber>
    </recommendedName>
</protein>
<gene>
    <name evidence="1" type="primary">hisB</name>
    <name type="ordered locus">SMU_1268</name>
</gene>